<reference key="1">
    <citation type="journal article" date="2003" name="Nature">
        <title>Genome sequence of Bacillus cereus and comparative analysis with Bacillus anthracis.</title>
        <authorList>
            <person name="Ivanova N."/>
            <person name="Sorokin A."/>
            <person name="Anderson I."/>
            <person name="Galleron N."/>
            <person name="Candelon B."/>
            <person name="Kapatral V."/>
            <person name="Bhattacharyya A."/>
            <person name="Reznik G."/>
            <person name="Mikhailova N."/>
            <person name="Lapidus A."/>
            <person name="Chu L."/>
            <person name="Mazur M."/>
            <person name="Goltsman E."/>
            <person name="Larsen N."/>
            <person name="D'Souza M."/>
            <person name="Walunas T."/>
            <person name="Grechkin Y."/>
            <person name="Pusch G."/>
            <person name="Haselkorn R."/>
            <person name="Fonstein M."/>
            <person name="Ehrlich S.D."/>
            <person name="Overbeek R."/>
            <person name="Kyrpides N.C."/>
        </authorList>
    </citation>
    <scope>NUCLEOTIDE SEQUENCE [LARGE SCALE GENOMIC DNA]</scope>
    <source>
        <strain>ATCC 14579 / DSM 31 / CCUG 7414 / JCM 2152 / NBRC 15305 / NCIMB 9373 / NCTC 2599 / NRRL B-3711</strain>
    </source>
</reference>
<keyword id="KW-0963">Cytoplasm</keyword>
<keyword id="KW-0312">Gluconeogenesis</keyword>
<keyword id="KW-0324">Glycolysis</keyword>
<keyword id="KW-0413">Isomerase</keyword>
<keyword id="KW-0597">Phosphoprotein</keyword>
<keyword id="KW-1185">Reference proteome</keyword>
<organism>
    <name type="scientific">Bacillus cereus (strain ATCC 14579 / DSM 31 / CCUG 7414 / JCM 2152 / NBRC 15305 / NCIMB 9373 / NCTC 2599 / NRRL B-3711)</name>
    <dbReference type="NCBI Taxonomy" id="226900"/>
    <lineage>
        <taxon>Bacteria</taxon>
        <taxon>Bacillati</taxon>
        <taxon>Bacillota</taxon>
        <taxon>Bacilli</taxon>
        <taxon>Bacillales</taxon>
        <taxon>Bacillaceae</taxon>
        <taxon>Bacillus</taxon>
        <taxon>Bacillus cereus group</taxon>
    </lineage>
</organism>
<feature type="chain" id="PRO_0000180586" description="Glucose-6-phosphate isomerase">
    <location>
        <begin position="1"/>
        <end position="450"/>
    </location>
</feature>
<feature type="active site" description="Proton donor" evidence="1">
    <location>
        <position position="291"/>
    </location>
</feature>
<feature type="active site" evidence="1">
    <location>
        <position position="312"/>
    </location>
</feature>
<feature type="active site" evidence="1">
    <location>
        <position position="426"/>
    </location>
</feature>
<feature type="modified residue" description="Phosphothreonine" evidence="1">
    <location>
        <position position="39"/>
    </location>
</feature>
<protein>
    <recommendedName>
        <fullName evidence="1">Glucose-6-phosphate isomerase</fullName>
        <shortName evidence="1">GPI</shortName>
        <ecNumber evidence="1">5.3.1.9</ecNumber>
    </recommendedName>
    <alternativeName>
        <fullName evidence="1">Phosphoglucose isomerase</fullName>
        <shortName evidence="1">PGI</shortName>
    </alternativeName>
    <alternativeName>
        <fullName evidence="1">Phosphohexose isomerase</fullName>
        <shortName evidence="1">PHI</shortName>
    </alternativeName>
</protein>
<proteinExistence type="inferred from homology"/>
<comment type="function">
    <text evidence="1">Catalyzes the reversible isomerization of glucose-6-phosphate to fructose-6-phosphate.</text>
</comment>
<comment type="catalytic activity">
    <reaction evidence="1">
        <text>alpha-D-glucose 6-phosphate = beta-D-fructose 6-phosphate</text>
        <dbReference type="Rhea" id="RHEA:11816"/>
        <dbReference type="ChEBI" id="CHEBI:57634"/>
        <dbReference type="ChEBI" id="CHEBI:58225"/>
        <dbReference type="EC" id="5.3.1.9"/>
    </reaction>
</comment>
<comment type="pathway">
    <text evidence="1">Carbohydrate biosynthesis; gluconeogenesis.</text>
</comment>
<comment type="pathway">
    <text evidence="1">Carbohydrate degradation; glycolysis; D-glyceraldehyde 3-phosphate and glycerone phosphate from D-glucose: step 2/4.</text>
</comment>
<comment type="subcellular location">
    <subcellularLocation>
        <location evidence="1">Cytoplasm</location>
    </subcellularLocation>
</comment>
<comment type="similarity">
    <text evidence="1">Belongs to the GPI family.</text>
</comment>
<accession>Q816G0</accession>
<sequence>MSTHVTFDYSKALSFIGEHEITYLRDAVKVTHHAIHEKTGAGNDFLGWVDLPLQYDKEEFARIQKCAEKIKNDSDILLVVGIGGSYLGARAAIEMLNHSFYNTLSKEQRKTPQVLFVGQNISSTYMKDLMDVLEGKDFSINVISKSGTTTEPALAFRIFRKLLEEKYGKEEARKRIYATTDKARGALKTLADNEGYETFVIPDDVGGRFSVLTPVGLLPIAVSGLNIEEMMKGAAAGHDDFGTSELEENPAYQYAVVRNALYNKGKTIEMLVNYEPALQYFAEWWKQLFGESEGKDQKGIFPSSANFSTDLHSLGQYVQEGRRDLFETVLKVGKSTHELTIESEENDLDGLNYLAGETVDFVNTKAYEGTLLAHSDGGVPNLIVNIPELNEYTFGYLVYFFEKACAMSGYLLGVNPFDQPGVEAYKKNMFALLGKPGFEELKAELEERLK</sequence>
<name>G6PI_BACCR</name>
<evidence type="ECO:0000255" key="1">
    <source>
        <dbReference type="HAMAP-Rule" id="MF_00473"/>
    </source>
</evidence>
<gene>
    <name evidence="1" type="primary">pgi</name>
    <name type="ordered locus">BC_4898</name>
</gene>
<dbReference type="EC" id="5.3.1.9" evidence="1"/>
<dbReference type="EMBL" id="AE016877">
    <property type="protein sequence ID" value="AAP11772.1"/>
    <property type="molecule type" value="Genomic_DNA"/>
</dbReference>
<dbReference type="RefSeq" id="NP_834571.1">
    <property type="nucleotide sequence ID" value="NC_004722.1"/>
</dbReference>
<dbReference type="RefSeq" id="WP_000103654.1">
    <property type="nucleotide sequence ID" value="NZ_CP138336.1"/>
</dbReference>
<dbReference type="SMR" id="Q816G0"/>
<dbReference type="STRING" id="226900.BC_4898"/>
<dbReference type="MetOSite" id="Q816G0"/>
<dbReference type="KEGG" id="bce:BC4898"/>
<dbReference type="PATRIC" id="fig|226900.8.peg.5048"/>
<dbReference type="HOGENOM" id="CLU_037303_0_1_9"/>
<dbReference type="OrthoDB" id="140919at2"/>
<dbReference type="UniPathway" id="UPA00109">
    <property type="reaction ID" value="UER00181"/>
</dbReference>
<dbReference type="UniPathway" id="UPA00138"/>
<dbReference type="Proteomes" id="UP000001417">
    <property type="component" value="Chromosome"/>
</dbReference>
<dbReference type="GO" id="GO:0005829">
    <property type="term" value="C:cytosol"/>
    <property type="evidence" value="ECO:0000318"/>
    <property type="project" value="GO_Central"/>
</dbReference>
<dbReference type="GO" id="GO:0097367">
    <property type="term" value="F:carbohydrate derivative binding"/>
    <property type="evidence" value="ECO:0007669"/>
    <property type="project" value="InterPro"/>
</dbReference>
<dbReference type="GO" id="GO:0004347">
    <property type="term" value="F:glucose-6-phosphate isomerase activity"/>
    <property type="evidence" value="ECO:0000318"/>
    <property type="project" value="GO_Central"/>
</dbReference>
<dbReference type="GO" id="GO:0048029">
    <property type="term" value="F:monosaccharide binding"/>
    <property type="evidence" value="ECO:0000318"/>
    <property type="project" value="GO_Central"/>
</dbReference>
<dbReference type="GO" id="GO:0006094">
    <property type="term" value="P:gluconeogenesis"/>
    <property type="evidence" value="ECO:0000318"/>
    <property type="project" value="GO_Central"/>
</dbReference>
<dbReference type="GO" id="GO:0051156">
    <property type="term" value="P:glucose 6-phosphate metabolic process"/>
    <property type="evidence" value="ECO:0000318"/>
    <property type="project" value="GO_Central"/>
</dbReference>
<dbReference type="GO" id="GO:0006096">
    <property type="term" value="P:glycolytic process"/>
    <property type="evidence" value="ECO:0000318"/>
    <property type="project" value="GO_Central"/>
</dbReference>
<dbReference type="CDD" id="cd05015">
    <property type="entry name" value="SIS_PGI_1"/>
    <property type="match status" value="1"/>
</dbReference>
<dbReference type="CDD" id="cd05016">
    <property type="entry name" value="SIS_PGI_2"/>
    <property type="match status" value="1"/>
</dbReference>
<dbReference type="FunFam" id="3.40.50.10490:FF:000015">
    <property type="entry name" value="Glucose-6-phosphate isomerase"/>
    <property type="match status" value="1"/>
</dbReference>
<dbReference type="FunFam" id="3.40.50.10490:FF:000016">
    <property type="entry name" value="Glucose-6-phosphate isomerase"/>
    <property type="match status" value="1"/>
</dbReference>
<dbReference type="FunFam" id="3.40.50.10490:FF:000020">
    <property type="entry name" value="Glucose-6-phosphate isomerase"/>
    <property type="match status" value="1"/>
</dbReference>
<dbReference type="Gene3D" id="3.40.50.10490">
    <property type="entry name" value="Glucose-6-phosphate isomerase like protein, domain 1"/>
    <property type="match status" value="3"/>
</dbReference>
<dbReference type="HAMAP" id="MF_00473">
    <property type="entry name" value="G6P_isomerase"/>
    <property type="match status" value="1"/>
</dbReference>
<dbReference type="InterPro" id="IPR001672">
    <property type="entry name" value="G6P_Isomerase"/>
</dbReference>
<dbReference type="InterPro" id="IPR018189">
    <property type="entry name" value="Phosphoglucose_isomerase_CS"/>
</dbReference>
<dbReference type="InterPro" id="IPR046348">
    <property type="entry name" value="SIS_dom_sf"/>
</dbReference>
<dbReference type="InterPro" id="IPR035476">
    <property type="entry name" value="SIS_PGI_1"/>
</dbReference>
<dbReference type="InterPro" id="IPR035482">
    <property type="entry name" value="SIS_PGI_2"/>
</dbReference>
<dbReference type="NCBIfam" id="NF010697">
    <property type="entry name" value="PRK14097.1"/>
    <property type="match status" value="1"/>
</dbReference>
<dbReference type="PANTHER" id="PTHR11469">
    <property type="entry name" value="GLUCOSE-6-PHOSPHATE ISOMERASE"/>
    <property type="match status" value="1"/>
</dbReference>
<dbReference type="PANTHER" id="PTHR11469:SF1">
    <property type="entry name" value="GLUCOSE-6-PHOSPHATE ISOMERASE"/>
    <property type="match status" value="1"/>
</dbReference>
<dbReference type="Pfam" id="PF00342">
    <property type="entry name" value="PGI"/>
    <property type="match status" value="1"/>
</dbReference>
<dbReference type="PRINTS" id="PR00662">
    <property type="entry name" value="G6PISOMERASE"/>
</dbReference>
<dbReference type="SUPFAM" id="SSF53697">
    <property type="entry name" value="SIS domain"/>
    <property type="match status" value="1"/>
</dbReference>
<dbReference type="PROSITE" id="PS00765">
    <property type="entry name" value="P_GLUCOSE_ISOMERASE_1"/>
    <property type="match status" value="1"/>
</dbReference>
<dbReference type="PROSITE" id="PS00174">
    <property type="entry name" value="P_GLUCOSE_ISOMERASE_2"/>
    <property type="match status" value="1"/>
</dbReference>
<dbReference type="PROSITE" id="PS51463">
    <property type="entry name" value="P_GLUCOSE_ISOMERASE_3"/>
    <property type="match status" value="1"/>
</dbReference>